<proteinExistence type="inferred from homology"/>
<dbReference type="EC" id="5.2.1.8" evidence="1"/>
<dbReference type="EMBL" id="AE013598">
    <property type="protein sequence ID" value="AAW74286.1"/>
    <property type="status" value="ALT_INIT"/>
    <property type="molecule type" value="Genomic_DNA"/>
</dbReference>
<dbReference type="SMR" id="Q5H435"/>
<dbReference type="STRING" id="291331.XOO1032"/>
<dbReference type="KEGG" id="xoo:XOO1032"/>
<dbReference type="HOGENOM" id="CLU_033058_2_0_6"/>
<dbReference type="Proteomes" id="UP000006735">
    <property type="component" value="Chromosome"/>
</dbReference>
<dbReference type="GO" id="GO:0005737">
    <property type="term" value="C:cytoplasm"/>
    <property type="evidence" value="ECO:0007669"/>
    <property type="project" value="UniProtKB-SubCell"/>
</dbReference>
<dbReference type="GO" id="GO:0003755">
    <property type="term" value="F:peptidyl-prolyl cis-trans isomerase activity"/>
    <property type="evidence" value="ECO:0007669"/>
    <property type="project" value="UniProtKB-UniRule"/>
</dbReference>
<dbReference type="GO" id="GO:0044183">
    <property type="term" value="F:protein folding chaperone"/>
    <property type="evidence" value="ECO:0007669"/>
    <property type="project" value="TreeGrafter"/>
</dbReference>
<dbReference type="GO" id="GO:0043022">
    <property type="term" value="F:ribosome binding"/>
    <property type="evidence" value="ECO:0007669"/>
    <property type="project" value="TreeGrafter"/>
</dbReference>
<dbReference type="GO" id="GO:0051083">
    <property type="term" value="P:'de novo' cotranslational protein folding"/>
    <property type="evidence" value="ECO:0007669"/>
    <property type="project" value="TreeGrafter"/>
</dbReference>
<dbReference type="GO" id="GO:0051301">
    <property type="term" value="P:cell division"/>
    <property type="evidence" value="ECO:0007669"/>
    <property type="project" value="UniProtKB-KW"/>
</dbReference>
<dbReference type="GO" id="GO:0061077">
    <property type="term" value="P:chaperone-mediated protein folding"/>
    <property type="evidence" value="ECO:0007669"/>
    <property type="project" value="TreeGrafter"/>
</dbReference>
<dbReference type="GO" id="GO:0015031">
    <property type="term" value="P:protein transport"/>
    <property type="evidence" value="ECO:0007669"/>
    <property type="project" value="UniProtKB-UniRule"/>
</dbReference>
<dbReference type="GO" id="GO:0043335">
    <property type="term" value="P:protein unfolding"/>
    <property type="evidence" value="ECO:0007669"/>
    <property type="project" value="TreeGrafter"/>
</dbReference>
<dbReference type="Gene3D" id="3.10.50.40">
    <property type="match status" value="1"/>
</dbReference>
<dbReference type="Gene3D" id="3.30.70.1050">
    <property type="entry name" value="Trigger factor ribosome-binding domain"/>
    <property type="match status" value="1"/>
</dbReference>
<dbReference type="Gene3D" id="1.10.3120.10">
    <property type="entry name" value="Trigger factor, C-terminal domain"/>
    <property type="match status" value="1"/>
</dbReference>
<dbReference type="HAMAP" id="MF_00303">
    <property type="entry name" value="Trigger_factor_Tig"/>
    <property type="match status" value="1"/>
</dbReference>
<dbReference type="InterPro" id="IPR046357">
    <property type="entry name" value="PPIase_dom_sf"/>
</dbReference>
<dbReference type="InterPro" id="IPR005215">
    <property type="entry name" value="Trig_fac"/>
</dbReference>
<dbReference type="InterPro" id="IPR008880">
    <property type="entry name" value="Trigger_fac_C"/>
</dbReference>
<dbReference type="InterPro" id="IPR037041">
    <property type="entry name" value="Trigger_fac_C_sf"/>
</dbReference>
<dbReference type="InterPro" id="IPR008881">
    <property type="entry name" value="Trigger_fac_ribosome-bd_bac"/>
</dbReference>
<dbReference type="InterPro" id="IPR036611">
    <property type="entry name" value="Trigger_fac_ribosome-bd_sf"/>
</dbReference>
<dbReference type="InterPro" id="IPR027304">
    <property type="entry name" value="Trigger_fact/SurA_dom_sf"/>
</dbReference>
<dbReference type="NCBIfam" id="TIGR00115">
    <property type="entry name" value="tig"/>
    <property type="match status" value="1"/>
</dbReference>
<dbReference type="PANTHER" id="PTHR30560">
    <property type="entry name" value="TRIGGER FACTOR CHAPERONE AND PEPTIDYL-PROLYL CIS/TRANS ISOMERASE"/>
    <property type="match status" value="1"/>
</dbReference>
<dbReference type="PANTHER" id="PTHR30560:SF3">
    <property type="entry name" value="TRIGGER FACTOR-LIKE PROTEIN TIG, CHLOROPLASTIC"/>
    <property type="match status" value="1"/>
</dbReference>
<dbReference type="Pfam" id="PF05698">
    <property type="entry name" value="Trigger_C"/>
    <property type="match status" value="1"/>
</dbReference>
<dbReference type="Pfam" id="PF05697">
    <property type="entry name" value="Trigger_N"/>
    <property type="match status" value="1"/>
</dbReference>
<dbReference type="PIRSF" id="PIRSF003095">
    <property type="entry name" value="Trigger_factor"/>
    <property type="match status" value="1"/>
</dbReference>
<dbReference type="SUPFAM" id="SSF54534">
    <property type="entry name" value="FKBP-like"/>
    <property type="match status" value="1"/>
</dbReference>
<dbReference type="SUPFAM" id="SSF109998">
    <property type="entry name" value="Triger factor/SurA peptide-binding domain-like"/>
    <property type="match status" value="1"/>
</dbReference>
<dbReference type="SUPFAM" id="SSF102735">
    <property type="entry name" value="Trigger factor ribosome-binding domain"/>
    <property type="match status" value="1"/>
</dbReference>
<gene>
    <name evidence="1" type="primary">tig</name>
    <name type="ordered locus">XOO1032</name>
</gene>
<evidence type="ECO:0000255" key="1">
    <source>
        <dbReference type="HAMAP-Rule" id="MF_00303"/>
    </source>
</evidence>
<evidence type="ECO:0000305" key="2"/>
<protein>
    <recommendedName>
        <fullName evidence="1">Trigger factor</fullName>
        <shortName evidence="1">TF</shortName>
        <ecNumber evidence="1">5.2.1.8</ecNumber>
    </recommendedName>
    <alternativeName>
        <fullName evidence="1">PPIase</fullName>
    </alternativeName>
</protein>
<comment type="function">
    <text evidence="1">Involved in protein export. Acts as a chaperone by maintaining the newly synthesized protein in an open conformation. Functions as a peptidyl-prolyl cis-trans isomerase.</text>
</comment>
<comment type="catalytic activity">
    <reaction evidence="1">
        <text>[protein]-peptidylproline (omega=180) = [protein]-peptidylproline (omega=0)</text>
        <dbReference type="Rhea" id="RHEA:16237"/>
        <dbReference type="Rhea" id="RHEA-COMP:10747"/>
        <dbReference type="Rhea" id="RHEA-COMP:10748"/>
        <dbReference type="ChEBI" id="CHEBI:83833"/>
        <dbReference type="ChEBI" id="CHEBI:83834"/>
        <dbReference type="EC" id="5.2.1.8"/>
    </reaction>
</comment>
<comment type="subcellular location">
    <subcellularLocation>
        <location>Cytoplasm</location>
    </subcellularLocation>
    <text evidence="1">About half TF is bound to the ribosome near the polypeptide exit tunnel while the other half is free in the cytoplasm.</text>
</comment>
<comment type="domain">
    <text evidence="1">Consists of 3 domains; the N-terminus binds the ribosome, the middle domain has PPIase activity, while the C-terminus has intrinsic chaperone activity on its own.</text>
</comment>
<comment type="similarity">
    <text evidence="1">Belongs to the FKBP-type PPIase family. Tig subfamily.</text>
</comment>
<comment type="sequence caution" evidence="2">
    <conflict type="erroneous initiation">
        <sequence resource="EMBL-CDS" id="AAW74286"/>
    </conflict>
</comment>
<name>TIG_XANOR</name>
<sequence length="430" mass="48229">MQASIESTGNLERRLTFTLPQERLETHVGGRLRELARTTRIKGFRPGKVPTKVIEQRFGQQVRAEAMEGLLRETFDSAVREHSLRLAGNPRIDQGETDFDFVATFEVVPDFGDIDVTTLSVVRATAEVTDADIDQMIENLRLQRRIWNPVERGAQAGDLVALETWSQAGDERLPADGVETGSSVLGSGVMFDQIEKGLEGLTKGEEKTLSVDFPAEWRVPQLAGKTVQVHVKAVEVSEPVLPAVDKEFIKSFGVKSGDAEQFRADIRTNLERELKGALMNRLRREVGEQLIAAYAHVEMPPRLVENEARSMLAQQVEQVRRSGRDPGQVPADAHQGFMDAAAKRVLVGLLVGEVARRNELRLESRRVSDTLRLIASTYEEPEQVIEMYRNDPQLMNGLQSRVMEEQVIDWIAERAQHTEQSLSFQDAIRV</sequence>
<accession>Q5H435</accession>
<organism>
    <name type="scientific">Xanthomonas oryzae pv. oryzae (strain KACC10331 / KXO85)</name>
    <dbReference type="NCBI Taxonomy" id="291331"/>
    <lineage>
        <taxon>Bacteria</taxon>
        <taxon>Pseudomonadati</taxon>
        <taxon>Pseudomonadota</taxon>
        <taxon>Gammaproteobacteria</taxon>
        <taxon>Lysobacterales</taxon>
        <taxon>Lysobacteraceae</taxon>
        <taxon>Xanthomonas</taxon>
    </lineage>
</organism>
<keyword id="KW-0131">Cell cycle</keyword>
<keyword id="KW-0132">Cell division</keyword>
<keyword id="KW-0143">Chaperone</keyword>
<keyword id="KW-0963">Cytoplasm</keyword>
<keyword id="KW-0413">Isomerase</keyword>
<keyword id="KW-1185">Reference proteome</keyword>
<keyword id="KW-0697">Rotamase</keyword>
<feature type="chain" id="PRO_0000179467" description="Trigger factor">
    <location>
        <begin position="1"/>
        <end position="430"/>
    </location>
</feature>
<feature type="domain" description="PPIase FKBP-type" evidence="1">
    <location>
        <begin position="157"/>
        <end position="242"/>
    </location>
</feature>
<reference key="1">
    <citation type="journal article" date="2005" name="Nucleic Acids Res.">
        <title>The genome sequence of Xanthomonas oryzae pathovar oryzae KACC10331, the bacterial blight pathogen of rice.</title>
        <authorList>
            <person name="Lee B.-M."/>
            <person name="Park Y.-J."/>
            <person name="Park D.-S."/>
            <person name="Kang H.-W."/>
            <person name="Kim J.-G."/>
            <person name="Song E.-S."/>
            <person name="Park I.-C."/>
            <person name="Yoon U.-H."/>
            <person name="Hahn J.-H."/>
            <person name="Koo B.-S."/>
            <person name="Lee G.-B."/>
            <person name="Kim H."/>
            <person name="Park H.-S."/>
            <person name="Yoon K.-O."/>
            <person name="Kim J.-H."/>
            <person name="Jung C.-H."/>
            <person name="Koh N.-H."/>
            <person name="Seo J.-S."/>
            <person name="Go S.-J."/>
        </authorList>
    </citation>
    <scope>NUCLEOTIDE SEQUENCE [LARGE SCALE GENOMIC DNA]</scope>
    <source>
        <strain>KACC10331 / KXO85</strain>
    </source>
</reference>